<comment type="function">
    <text evidence="3 6">Vimentins are class-III intermediate filaments found in various non-epithelial cells, especially mesenchymal cells. Vimentin is attached to the nucleus, endoplasmic reticulum, and mitochondria, either laterally or terminally (By similarity). Plays a role in cell directional movement, orientation, cell sheet organization and Golgi complex polarization at the cell migration front (PubMed:19386766). Protects SCRIB from proteasomal degradation and facilitates its localization to intermediate filaments in a cell contact-mediated manner (PubMed:19386766).</text>
</comment>
<comment type="function">
    <text evidence="1">Involved with LARP6 in the stabilization of type I collagen mRNAs for CO1A1 and CO1A2.</text>
</comment>
<comment type="subunit">
    <text evidence="1 2 3 6">Homomer assembled from elementary dimers (By similarity). Identified in complexes that contain VIM, EZR, AHNAK, BFSP1, BFSP2, ANK2, PLEC, PRX and spectrin (By similarity). Interacts with BCAS3 (By similarity). Interacts with LGSN (By similarity). Interacts with SYNM (By similarity). Interacts (via rod region) with PLEC (via CH 1 domain) (By similarity). Interacts with STK33 (By similarity). Interacts with LARP6 (By similarity). Interacts with RAB8B (By similarity). Interacts with TOR1A; the interaction associates TOR1A with the cytoskeleton. Interacts with TOR1AIP1 (By similarity). Interacts with TOR1AIP1 (By similarity). Interacts with DIAPH1 (By similarity). Interacts with EPPK1; interaction is dependent of higher-order structure of intermediate filament (By similarity). Interacts with the non-receptor tyrosine kinase SRMS; the interaction leads to phosphorylation of VIM (By similarity). Interacts with NOD2 (By similarity). Interacts (via head region) with CORO1C (By similarity). Interacts with HDGF (By similarity). Interacts with PRKCE (via phorbol-ester/DAG-type 2 domain) (By similarity). Interacts with BFSP2 (By similarity). Interacts with PPL (By similarity). Interacts with PKP1 and PKP2 (By similarity). Interacts with SCRIB (via PDZ domains); the interaction protects SCRIB from proteasomal degradation and facilitates SCRIB localization to intermediate filaments, the interaction is reduced by cell contact inhibition (PubMed:19386766).</text>
</comment>
<comment type="subcellular location">
    <subcellularLocation>
        <location evidence="6">Cytoplasm</location>
    </subcellularLocation>
    <subcellularLocation>
        <location evidence="1">Cytoplasm</location>
        <location evidence="1">Cytoskeleton</location>
    </subcellularLocation>
    <subcellularLocation>
        <location evidence="3">Nucleus matrix</location>
    </subcellularLocation>
    <subcellularLocation>
        <location evidence="2">Cell membrane</location>
    </subcellularLocation>
</comment>
<comment type="domain">
    <text evidence="1">The central alpha-helical coiled-coil IF rod domain mediates elementary homodimerization.</text>
</comment>
<comment type="domain">
    <text evidence="1">The [IL]-x-C-x-x-[DE] motif is a proposed target motif for cysteine S-nitrosylation mediated by the iNOS-S100A8/A9 transnitrosylase complex.</text>
</comment>
<comment type="PTM">
    <text evidence="1 3">Filament disassembly during mitosis is promoted by phosphorylation at Ser-55 as well as by nestin (By similarity). One of the most prominent phosphoproteins in various cells of mesenchymal origin. Phosphorylation is enhanced during cell division, at which time vimentin filaments are significantly reorganized. Phosphorylation by PKN1 inhibits the formation of filaments. Phosphorylated at Ser-56 by CDK5 during neutrophil secretion in the cytoplasm (By similarity). Phosphorylated by STK33 (By similarity). Phosphorylated on tyrosine residues by SRMS (By similarity).</text>
</comment>
<comment type="PTM">
    <text evidence="1">O-glycosylated during cytokinesis at sites identical or close to phosphorylation sites, this interferes with the phosphorylation status.</text>
</comment>
<comment type="PTM">
    <text evidence="1">S-nitrosylation is induced by interferon-gamma and oxidatively-modified low-densitity lipoprotein (LDL(ox)) possibly implicating the iNOS-S100A8/9 transnitrosylase complex.</text>
</comment>
<comment type="similarity">
    <text evidence="7">Belongs to the intermediate filament family.</text>
</comment>
<sequence>MSTRSVSSSSYRRMFGGPGTGSRPSSTRSYVTTSTRTYSLGSALRPSTSRSLYASSPGGAYATRSSAVRLRSSVPGVRLLQDSVDFSLADAINTEFKNTRTNEKVELQELNDRFANYIDKVRFLEQQNKILLAELEQLKGQGKSRLGDLYEEEMRELRRQVDQLTNDKARVEVERDNLAEDIMRLREKLQEEMLQREEAESTLQSFRQDVDNASLARLDLERKVESLQEEIAFLKKLHDEEIQELQAQIQDQHVQIDMDVSKPDLTAALRDVRQQYESVAAKNLQEAEEWYKSKFADLSEAANRNNDALRQAKQESNEYRRQVQSLTCEVDALKGTNESLERQMREMEENFAVEAANYQDTIGRLQDEIQNMKEEMARHLREYQDLLNVKMALDIEIATYRKLLEGEESRIALPLPNFSSLNLRETNLDSLPLVDTHSKRTLLIKTVETRDGQVINETSQHHDDLE</sequence>
<evidence type="ECO:0000250" key="1">
    <source>
        <dbReference type="UniProtKB" id="P08670"/>
    </source>
</evidence>
<evidence type="ECO:0000250" key="2">
    <source>
        <dbReference type="UniProtKB" id="P20152"/>
    </source>
</evidence>
<evidence type="ECO:0000250" key="3">
    <source>
        <dbReference type="UniProtKB" id="P31000"/>
    </source>
</evidence>
<evidence type="ECO:0000255" key="4">
    <source>
        <dbReference type="PROSITE-ProRule" id="PRU01188"/>
    </source>
</evidence>
<evidence type="ECO:0000256" key="5">
    <source>
        <dbReference type="SAM" id="MobiDB-lite"/>
    </source>
</evidence>
<evidence type="ECO:0000269" key="6">
    <source>
    </source>
</evidence>
<evidence type="ECO:0000305" key="7"/>
<evidence type="ECO:0000312" key="8">
    <source>
        <dbReference type="Proteomes" id="UP000002254"/>
    </source>
</evidence>
<evidence type="ECO:0000312" key="9">
    <source>
        <dbReference type="Proteomes" id="UP000694429"/>
    </source>
</evidence>
<keyword id="KW-0007">Acetylation</keyword>
<keyword id="KW-1003">Cell membrane</keyword>
<keyword id="KW-0175">Coiled coil</keyword>
<keyword id="KW-0963">Cytoplasm</keyword>
<keyword id="KW-0206">Cytoskeleton</keyword>
<keyword id="KW-0325">Glycoprotein</keyword>
<keyword id="KW-0403">Intermediate filament</keyword>
<keyword id="KW-1017">Isopeptide bond</keyword>
<keyword id="KW-0472">Membrane</keyword>
<keyword id="KW-0539">Nucleus</keyword>
<keyword id="KW-0597">Phosphoprotein</keyword>
<keyword id="KW-1185">Reference proteome</keyword>
<keyword id="KW-0702">S-nitrosylation</keyword>
<keyword id="KW-0832">Ubl conjugation</keyword>
<gene>
    <name type="primary">VIM</name>
</gene>
<dbReference type="RefSeq" id="NP_001273952.1">
    <property type="nucleotide sequence ID" value="NM_001287023.1"/>
</dbReference>
<dbReference type="SMR" id="A0A8C0N8E3"/>
<dbReference type="Ensembl" id="ENSCAFT00030023909.1">
    <property type="protein sequence ID" value="ENSCAFP00030020837.1"/>
    <property type="gene ID" value="ENSCAFG00030012938.1"/>
</dbReference>
<dbReference type="Ensembl" id="ENSCAFT00805023083">
    <property type="protein sequence ID" value="ENSCAFP00805018154"/>
    <property type="gene ID" value="ENSCAFG00805012633"/>
</dbReference>
<dbReference type="Ensembl" id="ENSCAFT00845024814.1">
    <property type="protein sequence ID" value="ENSCAFP00845019520.1"/>
    <property type="gene ID" value="ENSCAFG00845013892.1"/>
</dbReference>
<dbReference type="GeneID" id="477991"/>
<dbReference type="KEGG" id="cfa:477991"/>
<dbReference type="CTD" id="7431"/>
<dbReference type="GeneTree" id="ENSGT00940000156146"/>
<dbReference type="OMA" id="GGMYATK"/>
<dbReference type="OrthoDB" id="2441647at2759"/>
<dbReference type="Reactome" id="R-CFA-264870">
    <property type="pathway name" value="Caspase-mediated cleavage of cytoskeletal proteins"/>
</dbReference>
<dbReference type="Reactome" id="R-CFA-390522">
    <property type="pathway name" value="Striated Muscle Contraction"/>
</dbReference>
<dbReference type="Reactome" id="R-CFA-9013422">
    <property type="pathway name" value="RHOBTB1 GTPase cycle"/>
</dbReference>
<dbReference type="Reactome" id="R-CFA-9646399">
    <property type="pathway name" value="Aggrephagy"/>
</dbReference>
<dbReference type="Proteomes" id="UP000002254">
    <property type="component" value="Unplaced"/>
</dbReference>
<dbReference type="Proteomes" id="UP000694429">
    <property type="component" value="Chromosome 2"/>
</dbReference>
<dbReference type="Proteomes" id="UP000694542">
    <property type="component" value="Unplaced"/>
</dbReference>
<dbReference type="Proteomes" id="UP000805418">
    <property type="component" value="Chromosome 2"/>
</dbReference>
<dbReference type="GO" id="GO:0005737">
    <property type="term" value="C:cytoplasm"/>
    <property type="evidence" value="ECO:0000314"/>
    <property type="project" value="UniProtKB"/>
</dbReference>
<dbReference type="GO" id="GO:0005882">
    <property type="term" value="C:intermediate filament"/>
    <property type="evidence" value="ECO:0007669"/>
    <property type="project" value="UniProtKB-KW"/>
</dbReference>
<dbReference type="GO" id="GO:0016363">
    <property type="term" value="C:nuclear matrix"/>
    <property type="evidence" value="ECO:0007669"/>
    <property type="project" value="UniProtKB-SubCell"/>
</dbReference>
<dbReference type="GO" id="GO:0005886">
    <property type="term" value="C:plasma membrane"/>
    <property type="evidence" value="ECO:0007669"/>
    <property type="project" value="UniProtKB-SubCell"/>
</dbReference>
<dbReference type="GO" id="GO:0010634">
    <property type="term" value="P:positive regulation of epithelial cell migration"/>
    <property type="evidence" value="ECO:0000315"/>
    <property type="project" value="UniProtKB"/>
</dbReference>
<dbReference type="FunFam" id="1.20.5.1160:FF:000001">
    <property type="entry name" value="Keratin type II"/>
    <property type="match status" value="1"/>
</dbReference>
<dbReference type="FunFam" id="1.20.5.170:FF:000002">
    <property type="entry name" value="Type I keratin KA11"/>
    <property type="match status" value="1"/>
</dbReference>
<dbReference type="FunFam" id="1.20.5.500:FF:000001">
    <property type="entry name" value="Type II keratin 23"/>
    <property type="match status" value="1"/>
</dbReference>
<dbReference type="Gene3D" id="1.20.5.170">
    <property type="match status" value="1"/>
</dbReference>
<dbReference type="Gene3D" id="1.20.5.500">
    <property type="entry name" value="Single helix bin"/>
    <property type="match status" value="1"/>
</dbReference>
<dbReference type="Gene3D" id="1.20.5.1160">
    <property type="entry name" value="Vasodilator-stimulated phosphoprotein"/>
    <property type="match status" value="1"/>
</dbReference>
<dbReference type="InterPro" id="IPR018039">
    <property type="entry name" value="IF_conserved"/>
</dbReference>
<dbReference type="InterPro" id="IPR039008">
    <property type="entry name" value="IF_rod_dom"/>
</dbReference>
<dbReference type="InterPro" id="IPR006821">
    <property type="entry name" value="Intermed_filament_DNA-bd"/>
</dbReference>
<dbReference type="InterPro" id="IPR050405">
    <property type="entry name" value="Intermediate_filament"/>
</dbReference>
<dbReference type="PANTHER" id="PTHR45652">
    <property type="entry name" value="GLIAL FIBRILLARY ACIDIC PROTEIN"/>
    <property type="match status" value="1"/>
</dbReference>
<dbReference type="PANTHER" id="PTHR45652:SF5">
    <property type="entry name" value="VIMENTIN"/>
    <property type="match status" value="1"/>
</dbReference>
<dbReference type="Pfam" id="PF00038">
    <property type="entry name" value="Filament"/>
    <property type="match status" value="1"/>
</dbReference>
<dbReference type="Pfam" id="PF04732">
    <property type="entry name" value="Filament_head"/>
    <property type="match status" value="1"/>
</dbReference>
<dbReference type="SMART" id="SM01391">
    <property type="entry name" value="Filament"/>
    <property type="match status" value="1"/>
</dbReference>
<dbReference type="SUPFAM" id="SSF64593">
    <property type="entry name" value="Intermediate filament protein, coiled coil region"/>
    <property type="match status" value="2"/>
</dbReference>
<dbReference type="PROSITE" id="PS00226">
    <property type="entry name" value="IF_ROD_1"/>
    <property type="match status" value="1"/>
</dbReference>
<dbReference type="PROSITE" id="PS51842">
    <property type="entry name" value="IF_ROD_2"/>
    <property type="match status" value="1"/>
</dbReference>
<name>VIME_CANLF</name>
<protein>
    <recommendedName>
        <fullName evidence="1">Vimentin</fullName>
    </recommendedName>
</protein>
<feature type="initiator methionine" description="Removed" evidence="1">
    <location>
        <position position="1"/>
    </location>
</feature>
<feature type="chain" id="PRO_0000460945" description="Vimentin">
    <location>
        <begin position="2"/>
        <end position="466"/>
    </location>
</feature>
<feature type="domain" description="IF rod" evidence="4">
    <location>
        <begin position="103"/>
        <end position="411"/>
    </location>
</feature>
<feature type="region of interest" description="Disordered" evidence="5">
    <location>
        <begin position="1"/>
        <end position="32"/>
    </location>
</feature>
<feature type="region of interest" description="Head" evidence="1">
    <location>
        <begin position="2"/>
        <end position="95"/>
    </location>
</feature>
<feature type="region of interest" description="Coil 1A" evidence="1">
    <location>
        <begin position="96"/>
        <end position="131"/>
    </location>
</feature>
<feature type="region of interest" description="Linker 1" evidence="1">
    <location>
        <begin position="132"/>
        <end position="153"/>
    </location>
</feature>
<feature type="region of interest" description="Coil 1B" evidence="1">
    <location>
        <begin position="154"/>
        <end position="245"/>
    </location>
</feature>
<feature type="region of interest" description="Linker 12" evidence="1">
    <location>
        <begin position="246"/>
        <end position="268"/>
    </location>
</feature>
<feature type="region of interest" description="Coil 2" evidence="1">
    <location>
        <begin position="269"/>
        <end position="407"/>
    </location>
</feature>
<feature type="region of interest" description="Tail" evidence="1">
    <location>
        <begin position="408"/>
        <end position="466"/>
    </location>
</feature>
<feature type="coiled-coil region" evidence="1">
    <location>
        <begin position="96"/>
        <end position="131"/>
    </location>
</feature>
<feature type="coiled-coil region" evidence="1">
    <location>
        <begin position="154"/>
        <end position="245"/>
    </location>
</feature>
<feature type="coiled-coil region" evidence="1">
    <location>
        <begin position="303"/>
        <end position="407"/>
    </location>
</feature>
<feature type="short sequence motif" description="[IL]-x-C-x-x-[DE] motif" evidence="1">
    <location>
        <begin position="326"/>
        <end position="329"/>
    </location>
</feature>
<feature type="compositionally biased region" description="Low complexity" evidence="5">
    <location>
        <begin position="1"/>
        <end position="13"/>
    </location>
</feature>
<feature type="compositionally biased region" description="Low complexity" evidence="5">
    <location>
        <begin position="21"/>
        <end position="32"/>
    </location>
</feature>
<feature type="site" description="Stutter" evidence="1">
    <location>
        <position position="351"/>
    </location>
</feature>
<feature type="modified residue" description="N-acetylserine" evidence="1">
    <location>
        <position position="2"/>
    </location>
</feature>
<feature type="modified residue" description="Phosphoserine" evidence="1">
    <location>
        <position position="5"/>
    </location>
</feature>
<feature type="modified residue" description="Phosphoserine" evidence="1">
    <location>
        <position position="7"/>
    </location>
</feature>
<feature type="modified residue" description="Phosphoserine" evidence="1">
    <location>
        <position position="8"/>
    </location>
</feature>
<feature type="modified residue" description="Phosphoserine" evidence="1">
    <location>
        <position position="9"/>
    </location>
</feature>
<feature type="modified residue" description="Phosphoserine" evidence="1">
    <location>
        <position position="10"/>
    </location>
</feature>
<feature type="modified residue" description="Phosphothreonine" evidence="1">
    <location>
        <position position="20"/>
    </location>
</feature>
<feature type="modified residue" description="Phosphoserine" evidence="1">
    <location>
        <position position="25"/>
    </location>
</feature>
<feature type="modified residue" description="Phosphoserine" evidence="1">
    <location>
        <position position="26"/>
    </location>
</feature>
<feature type="modified residue" description="Phosphoserine" evidence="1">
    <location>
        <position position="34"/>
    </location>
</feature>
<feature type="modified residue" description="Phosphoserine" evidence="1">
    <location>
        <position position="39"/>
    </location>
</feature>
<feature type="modified residue" description="Phosphoserine" evidence="1">
    <location>
        <position position="42"/>
    </location>
</feature>
<feature type="modified residue" description="Phosphoserine" evidence="1">
    <location>
        <position position="47"/>
    </location>
</feature>
<feature type="modified residue" description="Phosphoserine" evidence="1">
    <location>
        <position position="49"/>
    </location>
</feature>
<feature type="modified residue" description="Phosphoserine" evidence="1">
    <location>
        <position position="51"/>
    </location>
</feature>
<feature type="modified residue" description="Phosphotyrosine" evidence="2">
    <location>
        <position position="53"/>
    </location>
</feature>
<feature type="modified residue" description="Phosphoserine" evidence="3">
    <location>
        <position position="55"/>
    </location>
</feature>
<feature type="modified residue" description="Phosphoserine" evidence="1">
    <location>
        <position position="56"/>
    </location>
</feature>
<feature type="modified residue" description="Phosphotyrosine" evidence="1">
    <location>
        <position position="61"/>
    </location>
</feature>
<feature type="modified residue" description="Phosphoserine" evidence="1">
    <location>
        <position position="66"/>
    </location>
</feature>
<feature type="modified residue" description="Phosphoserine" evidence="1">
    <location>
        <position position="72"/>
    </location>
</feature>
<feature type="modified residue" description="Phosphoserine" evidence="1">
    <location>
        <position position="73"/>
    </location>
</feature>
<feature type="modified residue" description="Phosphoserine" evidence="1">
    <location>
        <position position="83"/>
    </location>
</feature>
<feature type="modified residue" description="Phosphoserine" evidence="1">
    <location>
        <position position="87"/>
    </location>
</feature>
<feature type="modified residue" description="Phosphotyrosine" evidence="1">
    <location>
        <position position="117"/>
    </location>
</feature>
<feature type="modified residue" description="N6-acetyllysine; alternate" evidence="1">
    <location>
        <position position="120"/>
    </location>
</feature>
<feature type="modified residue" description="N6-succinyllysine; alternate" evidence="2">
    <location>
        <position position="120"/>
    </location>
</feature>
<feature type="modified residue" description="N6-acetyllysine; alternate" evidence="2">
    <location>
        <position position="129"/>
    </location>
</feature>
<feature type="modified residue" description="N6-succinyllysine; alternate" evidence="2">
    <location>
        <position position="129"/>
    </location>
</feature>
<feature type="modified residue" description="N6-acetyllysine; alternate" evidence="1">
    <location>
        <position position="139"/>
    </location>
</feature>
<feature type="modified residue" description="Phosphoserine" evidence="1">
    <location>
        <position position="144"/>
    </location>
</feature>
<feature type="modified residue" description="N6-acetyllysine" evidence="2">
    <location>
        <position position="168"/>
    </location>
</feature>
<feature type="modified residue" description="N6-acetyllysine; alternate" evidence="2">
    <location>
        <position position="188"/>
    </location>
</feature>
<feature type="modified residue" description="N6-succinyllysine; alternate" evidence="2">
    <location>
        <position position="188"/>
    </location>
</feature>
<feature type="modified residue" description="Phosphoserine" evidence="1">
    <location>
        <position position="214"/>
    </location>
</feature>
<feature type="modified residue" description="N6-acetyllysine; alternate" evidence="2">
    <location>
        <position position="223"/>
    </location>
</feature>
<feature type="modified residue" description="Phosphoserine" evidence="1">
    <location>
        <position position="226"/>
    </location>
</feature>
<feature type="modified residue" description="N6-acetyllysine" evidence="2">
    <location>
        <position position="235"/>
    </location>
</feature>
<feature type="modified residue" description="N6-acetyllysine; alternate" evidence="2">
    <location>
        <position position="294"/>
    </location>
</feature>
<feature type="modified residue" description="N6-succinyllysine; alternate" evidence="2">
    <location>
        <position position="294"/>
    </location>
</feature>
<feature type="modified residue" description="Phosphoserine" evidence="1">
    <location>
        <position position="299"/>
    </location>
</feature>
<feature type="modified residue" description="Phosphoserine" evidence="2">
    <location>
        <position position="325"/>
    </location>
</feature>
<feature type="modified residue" description="N6-acetyllysine; alternate" evidence="1">
    <location>
        <position position="373"/>
    </location>
</feature>
<feature type="modified residue" description="Phosphoserine" evidence="1">
    <location>
        <position position="409"/>
    </location>
</feature>
<feature type="modified residue" description="Phosphoserine" evidence="1">
    <location>
        <position position="419"/>
    </location>
</feature>
<feature type="modified residue" description="Phosphoserine" evidence="1">
    <location>
        <position position="420"/>
    </location>
</feature>
<feature type="modified residue" description="Phosphothreonine" evidence="1">
    <location>
        <position position="426"/>
    </location>
</feature>
<feature type="modified residue" description="Phosphoserine" evidence="1">
    <location>
        <position position="430"/>
    </location>
</feature>
<feature type="modified residue" description="Phosphothreonine" evidence="1">
    <location>
        <position position="436"/>
    </location>
</feature>
<feature type="modified residue" description="Phosphoserine" evidence="1">
    <location>
        <position position="438"/>
    </location>
</feature>
<feature type="modified residue" description="N6-acetyllysine; alternate" evidence="1">
    <location>
        <position position="445"/>
    </location>
</feature>
<feature type="modified residue" description="N6-succinyllysine; alternate" evidence="2">
    <location>
        <position position="445"/>
    </location>
</feature>
<feature type="modified residue" description="Phosphothreonine" evidence="1">
    <location>
        <position position="446"/>
    </location>
</feature>
<feature type="modified residue" description="Phosphothreonine" evidence="1">
    <location>
        <position position="458"/>
    </location>
</feature>
<feature type="modified residue" description="Phosphoserine" evidence="1">
    <location>
        <position position="459"/>
    </location>
</feature>
<feature type="glycosylation site" description="O-linked (GlcNAc) serine; alternate" evidence="1">
    <location>
        <position position="7"/>
    </location>
</feature>
<feature type="glycosylation site" description="O-linked (GlcNAc) threonine" evidence="1">
    <location>
        <position position="33"/>
    </location>
</feature>
<feature type="glycosylation site" description="O-linked (GlcNAc) serine; alternate" evidence="1">
    <location>
        <position position="34"/>
    </location>
</feature>
<feature type="cross-link" description="Glycyl lysine isopeptide (Lys-Gly) (interchain with G-Cter in SUMO2)" evidence="1">
    <location>
        <position position="104"/>
    </location>
</feature>
<feature type="cross-link" description="Glycyl lysine isopeptide (Lys-Gly) (interchain with G-Cter in SUMO2); alternate" evidence="1">
    <location>
        <position position="120"/>
    </location>
</feature>
<feature type="cross-link" description="Glycyl lysine isopeptide (Lys-Gly) (interchain with G-Cter in SUMO2); alternate" evidence="1">
    <location>
        <position position="129"/>
    </location>
</feature>
<feature type="cross-link" description="Glycyl lysine isopeptide (Lys-Gly) (interchain with G-Cter in SUMO2); alternate" evidence="1">
    <location>
        <position position="139"/>
    </location>
</feature>
<feature type="cross-link" description="Glycyl lysine isopeptide (Lys-Gly) (interchain with G-Cter in SUMO2); alternate" evidence="1">
    <location>
        <position position="223"/>
    </location>
</feature>
<feature type="cross-link" description="Glycyl lysine isopeptide (Lys-Gly) (interchain with G-Cter in SUMO2)" evidence="1">
    <location>
        <position position="262"/>
    </location>
</feature>
<feature type="cross-link" description="Glycyl lysine isopeptide (Lys-Gly) (interchain with G-Cter in SUMO2); alternate" evidence="1">
    <location>
        <position position="294"/>
    </location>
</feature>
<feature type="cross-link" description="Glycyl lysine isopeptide (Lys-Gly) (interchain with G-Cter in SUMO2)" evidence="1">
    <location>
        <position position="313"/>
    </location>
</feature>
<feature type="cross-link" description="Glycyl lysine isopeptide (Lys-Gly) (interchain with G-Cter in SUMO2); alternate" evidence="1">
    <location>
        <position position="373"/>
    </location>
</feature>
<feature type="cross-link" description="Glycyl lysine isopeptide (Lys-Gly) (interchain with G-Cter in SUMO2)" evidence="1">
    <location>
        <position position="439"/>
    </location>
</feature>
<feature type="cross-link" description="Glycyl lysine isopeptide (Lys-Gly) (interchain with G-Cter in SUMO1); alternate" evidence="1">
    <location>
        <position position="445"/>
    </location>
</feature>
<feature type="cross-link" description="Glycyl lysine isopeptide (Lys-Gly) (interchain with G-Cter in SUMO2); alternate" evidence="1">
    <location>
        <position position="445"/>
    </location>
</feature>
<proteinExistence type="evidence at protein level"/>
<accession>A0A8C0N8E3</accession>
<accession>A0A8I3NU02</accession>
<organism evidence="9">
    <name type="scientific">Canis lupus familiaris</name>
    <name type="common">Dog</name>
    <name type="synonym">Canis familiaris</name>
    <dbReference type="NCBI Taxonomy" id="9615"/>
    <lineage>
        <taxon>Eukaryota</taxon>
        <taxon>Metazoa</taxon>
        <taxon>Chordata</taxon>
        <taxon>Craniata</taxon>
        <taxon>Vertebrata</taxon>
        <taxon>Euteleostomi</taxon>
        <taxon>Mammalia</taxon>
        <taxon>Eutheria</taxon>
        <taxon>Laurasiatheria</taxon>
        <taxon>Carnivora</taxon>
        <taxon>Caniformia</taxon>
        <taxon>Canidae</taxon>
        <taxon>Canis</taxon>
    </lineage>
</organism>
<reference evidence="8" key="1">
    <citation type="journal article" date="2005" name="Nature">
        <title>Genome sequence, comparative analysis and haplotype structure of the domestic dog.</title>
        <authorList>
            <person name="Lindblad-Toh K."/>
            <person name="Wade C.M."/>
            <person name="Mikkelsen T.S."/>
            <person name="Karlsson E.K."/>
            <person name="Jaffe D.B."/>
            <person name="Kamal M."/>
            <person name="Clamp M."/>
            <person name="Chang J.L."/>
            <person name="Kulbokas E.J. III"/>
            <person name="Zody M.C."/>
            <person name="Mauceli E."/>
            <person name="Xie X."/>
            <person name="Breen M."/>
            <person name="Wayne R.K."/>
            <person name="Ostrander E.A."/>
            <person name="Ponting C.P."/>
            <person name="Galibert F."/>
            <person name="Smith D.R."/>
            <person name="deJong P.J."/>
            <person name="Kirkness E.F."/>
            <person name="Alvarez P."/>
            <person name="Biagi T."/>
            <person name="Brockman W."/>
            <person name="Butler J."/>
            <person name="Chin C.-W."/>
            <person name="Cook A."/>
            <person name="Cuff J."/>
            <person name="Daly M.J."/>
            <person name="DeCaprio D."/>
            <person name="Gnerre S."/>
            <person name="Grabherr M."/>
            <person name="Kellis M."/>
            <person name="Kleber M."/>
            <person name="Bardeleben C."/>
            <person name="Goodstadt L."/>
            <person name="Heger A."/>
            <person name="Hitte C."/>
            <person name="Kim L."/>
            <person name="Koepfli K.-P."/>
            <person name="Parker H.G."/>
            <person name="Pollinger J.P."/>
            <person name="Searle S.M.J."/>
            <person name="Sutter N.B."/>
            <person name="Thomas R."/>
            <person name="Webber C."/>
            <person name="Baldwin J."/>
            <person name="Abebe A."/>
            <person name="Abouelleil A."/>
            <person name="Aftuck L."/>
            <person name="Ait-Zahra M."/>
            <person name="Aldredge T."/>
            <person name="Allen N."/>
            <person name="An P."/>
            <person name="Anderson S."/>
            <person name="Antoine C."/>
            <person name="Arachchi H."/>
            <person name="Aslam A."/>
            <person name="Ayotte L."/>
            <person name="Bachantsang P."/>
            <person name="Barry A."/>
            <person name="Bayul T."/>
            <person name="Benamara M."/>
            <person name="Berlin A."/>
            <person name="Bessette D."/>
            <person name="Blitshteyn B."/>
            <person name="Bloom T."/>
            <person name="Blye J."/>
            <person name="Boguslavskiy L."/>
            <person name="Bonnet C."/>
            <person name="Boukhgalter B."/>
            <person name="Brown A."/>
            <person name="Cahill P."/>
            <person name="Calixte N."/>
            <person name="Camarata J."/>
            <person name="Cheshatsang Y."/>
            <person name="Chu J."/>
            <person name="Citroen M."/>
            <person name="Collymore A."/>
            <person name="Cooke P."/>
            <person name="Dawoe T."/>
            <person name="Daza R."/>
            <person name="Decktor K."/>
            <person name="DeGray S."/>
            <person name="Dhargay N."/>
            <person name="Dooley K."/>
            <person name="Dooley K."/>
            <person name="Dorje P."/>
            <person name="Dorjee K."/>
            <person name="Dorris L."/>
            <person name="Duffey N."/>
            <person name="Dupes A."/>
            <person name="Egbiremolen O."/>
            <person name="Elong R."/>
            <person name="Falk J."/>
            <person name="Farina A."/>
            <person name="Faro S."/>
            <person name="Ferguson D."/>
            <person name="Ferreira P."/>
            <person name="Fisher S."/>
            <person name="FitzGerald M."/>
            <person name="Foley K."/>
            <person name="Foley C."/>
            <person name="Franke A."/>
            <person name="Friedrich D."/>
            <person name="Gage D."/>
            <person name="Garber M."/>
            <person name="Gearin G."/>
            <person name="Giannoukos G."/>
            <person name="Goode T."/>
            <person name="Goyette A."/>
            <person name="Graham J."/>
            <person name="Grandbois E."/>
            <person name="Gyaltsen K."/>
            <person name="Hafez N."/>
            <person name="Hagopian D."/>
            <person name="Hagos B."/>
            <person name="Hall J."/>
            <person name="Healy C."/>
            <person name="Hegarty R."/>
            <person name="Honan T."/>
            <person name="Horn A."/>
            <person name="Houde N."/>
            <person name="Hughes L."/>
            <person name="Hunnicutt L."/>
            <person name="Husby M."/>
            <person name="Jester B."/>
            <person name="Jones C."/>
            <person name="Kamat A."/>
            <person name="Kanga B."/>
            <person name="Kells C."/>
            <person name="Khazanovich D."/>
            <person name="Kieu A.C."/>
            <person name="Kisner P."/>
            <person name="Kumar M."/>
            <person name="Lance K."/>
            <person name="Landers T."/>
            <person name="Lara M."/>
            <person name="Lee W."/>
            <person name="Leger J.-P."/>
            <person name="Lennon N."/>
            <person name="Leuper L."/>
            <person name="LeVine S."/>
            <person name="Liu J."/>
            <person name="Liu X."/>
            <person name="Lokyitsang Y."/>
            <person name="Lokyitsang T."/>
            <person name="Lui A."/>
            <person name="Macdonald J."/>
            <person name="Major J."/>
            <person name="Marabella R."/>
            <person name="Maru K."/>
            <person name="Matthews C."/>
            <person name="McDonough S."/>
            <person name="Mehta T."/>
            <person name="Meldrim J."/>
            <person name="Melnikov A."/>
            <person name="Meneus L."/>
            <person name="Mihalev A."/>
            <person name="Mihova T."/>
            <person name="Miller K."/>
            <person name="Mittelman R."/>
            <person name="Mlenga V."/>
            <person name="Mulrain L."/>
            <person name="Munson G."/>
            <person name="Navidi A."/>
            <person name="Naylor J."/>
            <person name="Nguyen T."/>
            <person name="Nguyen N."/>
            <person name="Nguyen C."/>
            <person name="Nguyen T."/>
            <person name="Nicol R."/>
            <person name="Norbu N."/>
            <person name="Norbu C."/>
            <person name="Novod N."/>
            <person name="Nyima T."/>
            <person name="Olandt P."/>
            <person name="O'Neill B."/>
            <person name="O'Neill K."/>
            <person name="Osman S."/>
            <person name="Oyono L."/>
            <person name="Patti C."/>
            <person name="Perrin D."/>
            <person name="Phunkhang P."/>
            <person name="Pierre F."/>
            <person name="Priest M."/>
            <person name="Rachupka A."/>
            <person name="Raghuraman S."/>
            <person name="Rameau R."/>
            <person name="Ray V."/>
            <person name="Raymond C."/>
            <person name="Rege F."/>
            <person name="Rise C."/>
            <person name="Rogers J."/>
            <person name="Rogov P."/>
            <person name="Sahalie J."/>
            <person name="Settipalli S."/>
            <person name="Sharpe T."/>
            <person name="Shea T."/>
            <person name="Sheehan M."/>
            <person name="Sherpa N."/>
            <person name="Shi J."/>
            <person name="Shih D."/>
            <person name="Sloan J."/>
            <person name="Smith C."/>
            <person name="Sparrow T."/>
            <person name="Stalker J."/>
            <person name="Stange-Thomann N."/>
            <person name="Stavropoulos S."/>
            <person name="Stone C."/>
            <person name="Stone S."/>
            <person name="Sykes S."/>
            <person name="Tchuinga P."/>
            <person name="Tenzing P."/>
            <person name="Tesfaye S."/>
            <person name="Thoulutsang D."/>
            <person name="Thoulutsang Y."/>
            <person name="Topham K."/>
            <person name="Topping I."/>
            <person name="Tsamla T."/>
            <person name="Vassiliev H."/>
            <person name="Venkataraman V."/>
            <person name="Vo A."/>
            <person name="Wangchuk T."/>
            <person name="Wangdi T."/>
            <person name="Weiand M."/>
            <person name="Wilkinson J."/>
            <person name="Wilson A."/>
            <person name="Yadav S."/>
            <person name="Yang S."/>
            <person name="Yang X."/>
            <person name="Young G."/>
            <person name="Yu Q."/>
            <person name="Zainoun J."/>
            <person name="Zembek L."/>
            <person name="Zimmer A."/>
            <person name="Lander E.S."/>
        </authorList>
    </citation>
    <scope>NUCLEOTIDE SEQUENCE [LARGE SCALE GENOMIC DNA]</scope>
    <source>
        <strain evidence="8">Boxer</strain>
    </source>
</reference>
<reference evidence="7" key="2">
    <citation type="journal article" date="2009" name="Mol. Biol. Cell">
        <title>Vimentin regulates scribble activity by protecting it from proteasomal degradation.</title>
        <authorList>
            <person name="Phua D.C."/>
            <person name="Humbert P.O."/>
            <person name="Hunziker W."/>
        </authorList>
    </citation>
    <scope>FUNCTION</scope>
    <scope>INTERACTION WITH SCRIB</scope>
    <scope>SUBCELLULAR LOCATION</scope>
</reference>